<protein>
    <recommendedName>
        <fullName evidence="1">Ribonuclease H</fullName>
        <shortName evidence="1">RNase H</shortName>
        <ecNumber evidence="1">3.1.26.4</ecNumber>
    </recommendedName>
</protein>
<reference key="1">
    <citation type="journal article" date="2015" name="Proc. Natl. Acad. Sci. U.S.A.">
        <title>Trichodesmium genome maintains abundant, widespread noncoding DNA in situ, despite oligotrophic lifestyle.</title>
        <authorList>
            <person name="Walworth N."/>
            <person name="Pfreundt U."/>
            <person name="Nelson W.C."/>
            <person name="Mincer T."/>
            <person name="Heidelberg J.F."/>
            <person name="Fu F."/>
            <person name="Waterbury J.B."/>
            <person name="Glavina del Rio T."/>
            <person name="Goodwin L."/>
            <person name="Kyrpides N.C."/>
            <person name="Land M.L."/>
            <person name="Woyke T."/>
            <person name="Hutchins D.A."/>
            <person name="Hess W.R."/>
            <person name="Webb E.A."/>
        </authorList>
    </citation>
    <scope>NUCLEOTIDE SEQUENCE [LARGE SCALE GENOMIC DNA]</scope>
    <source>
        <strain>IMS101</strain>
    </source>
</reference>
<proteinExistence type="inferred from homology"/>
<name>RNH_TRIEI</name>
<keyword id="KW-0963">Cytoplasm</keyword>
<keyword id="KW-0255">Endonuclease</keyword>
<keyword id="KW-0378">Hydrolase</keyword>
<keyword id="KW-0460">Magnesium</keyword>
<keyword id="KW-0479">Metal-binding</keyword>
<keyword id="KW-0540">Nuclease</keyword>
<comment type="function">
    <text evidence="1">Endonuclease that specifically degrades the RNA of RNA-DNA hybrids.</text>
</comment>
<comment type="catalytic activity">
    <reaction evidence="1">
        <text>Endonucleolytic cleavage to 5'-phosphomonoester.</text>
        <dbReference type="EC" id="3.1.26.4"/>
    </reaction>
</comment>
<comment type="cofactor">
    <cofactor evidence="1">
        <name>Mg(2+)</name>
        <dbReference type="ChEBI" id="CHEBI:18420"/>
    </cofactor>
    <text evidence="1">Binds 1 Mg(2+) ion per subunit. May bind a second metal ion at a regulatory site, or after substrate binding.</text>
</comment>
<comment type="subunit">
    <text evidence="1">Monomer.</text>
</comment>
<comment type="subcellular location">
    <subcellularLocation>
        <location evidence="1">Cytoplasm</location>
    </subcellularLocation>
</comment>
<comment type="similarity">
    <text evidence="1">Belongs to the RNase H family.</text>
</comment>
<feature type="chain" id="PRO_1000074681" description="Ribonuclease H">
    <location>
        <begin position="1"/>
        <end position="157"/>
    </location>
</feature>
<feature type="domain" description="RNase H type-1" evidence="2">
    <location>
        <begin position="4"/>
        <end position="146"/>
    </location>
</feature>
<feature type="binding site" evidence="1">
    <location>
        <position position="13"/>
    </location>
    <ligand>
        <name>Mg(2+)</name>
        <dbReference type="ChEBI" id="CHEBI:18420"/>
        <label>1</label>
    </ligand>
</feature>
<feature type="binding site" evidence="1">
    <location>
        <position position="13"/>
    </location>
    <ligand>
        <name>Mg(2+)</name>
        <dbReference type="ChEBI" id="CHEBI:18420"/>
        <label>2</label>
    </ligand>
</feature>
<feature type="binding site" evidence="1">
    <location>
        <position position="51"/>
    </location>
    <ligand>
        <name>Mg(2+)</name>
        <dbReference type="ChEBI" id="CHEBI:18420"/>
        <label>1</label>
    </ligand>
</feature>
<feature type="binding site" evidence="1">
    <location>
        <position position="73"/>
    </location>
    <ligand>
        <name>Mg(2+)</name>
        <dbReference type="ChEBI" id="CHEBI:18420"/>
        <label>1</label>
    </ligand>
</feature>
<feature type="binding site" evidence="1">
    <location>
        <position position="138"/>
    </location>
    <ligand>
        <name>Mg(2+)</name>
        <dbReference type="ChEBI" id="CHEBI:18420"/>
        <label>2</label>
    </ligand>
</feature>
<evidence type="ECO:0000255" key="1">
    <source>
        <dbReference type="HAMAP-Rule" id="MF_00042"/>
    </source>
</evidence>
<evidence type="ECO:0000255" key="2">
    <source>
        <dbReference type="PROSITE-ProRule" id="PRU00408"/>
    </source>
</evidence>
<gene>
    <name evidence="1" type="primary">rnhA</name>
    <name type="ordered locus">Tery_1584</name>
</gene>
<organism>
    <name type="scientific">Trichodesmium erythraeum (strain IMS101)</name>
    <dbReference type="NCBI Taxonomy" id="203124"/>
    <lineage>
        <taxon>Bacteria</taxon>
        <taxon>Bacillati</taxon>
        <taxon>Cyanobacteriota</taxon>
        <taxon>Cyanophyceae</taxon>
        <taxon>Oscillatoriophycideae</taxon>
        <taxon>Oscillatoriales</taxon>
        <taxon>Microcoleaceae</taxon>
        <taxon>Trichodesmium</taxon>
    </lineage>
</organism>
<accession>Q115G0</accession>
<sequence length="157" mass="17720">MTEKRTEITIYTDGACSGNPGPGGYGIIILSEKKRQELSGGYKLTTNNRMELMAVIVGLEQLEIPSIVNLYTDSKYIVDAVTKGWAKRWRANSWKRNKKDKAMNPDLWGKLLDLCSKHQVEFSWVRGHSGNIENERCDKLAVKASQKLDLPSDLGYQ</sequence>
<dbReference type="EC" id="3.1.26.4" evidence="1"/>
<dbReference type="EMBL" id="CP000393">
    <property type="protein sequence ID" value="ABG50864.1"/>
    <property type="molecule type" value="Genomic_DNA"/>
</dbReference>
<dbReference type="RefSeq" id="WP_011611240.1">
    <property type="nucleotide sequence ID" value="NC_008312.1"/>
</dbReference>
<dbReference type="SMR" id="Q115G0"/>
<dbReference type="STRING" id="203124.Tery_1584"/>
<dbReference type="KEGG" id="ter:Tery_1584"/>
<dbReference type="eggNOG" id="COG0328">
    <property type="taxonomic scope" value="Bacteria"/>
</dbReference>
<dbReference type="HOGENOM" id="CLU_030894_6_2_3"/>
<dbReference type="OrthoDB" id="7845843at2"/>
<dbReference type="GO" id="GO:0005737">
    <property type="term" value="C:cytoplasm"/>
    <property type="evidence" value="ECO:0007669"/>
    <property type="project" value="UniProtKB-SubCell"/>
</dbReference>
<dbReference type="GO" id="GO:0000287">
    <property type="term" value="F:magnesium ion binding"/>
    <property type="evidence" value="ECO:0007669"/>
    <property type="project" value="UniProtKB-UniRule"/>
</dbReference>
<dbReference type="GO" id="GO:0003676">
    <property type="term" value="F:nucleic acid binding"/>
    <property type="evidence" value="ECO:0007669"/>
    <property type="project" value="InterPro"/>
</dbReference>
<dbReference type="GO" id="GO:0004523">
    <property type="term" value="F:RNA-DNA hybrid ribonuclease activity"/>
    <property type="evidence" value="ECO:0007669"/>
    <property type="project" value="UniProtKB-UniRule"/>
</dbReference>
<dbReference type="GO" id="GO:0043137">
    <property type="term" value="P:DNA replication, removal of RNA primer"/>
    <property type="evidence" value="ECO:0007669"/>
    <property type="project" value="TreeGrafter"/>
</dbReference>
<dbReference type="CDD" id="cd09278">
    <property type="entry name" value="RNase_HI_prokaryote_like"/>
    <property type="match status" value="1"/>
</dbReference>
<dbReference type="FunFam" id="3.30.420.10:FF:000089">
    <property type="entry name" value="Ribonuclease H"/>
    <property type="match status" value="1"/>
</dbReference>
<dbReference type="Gene3D" id="3.30.420.10">
    <property type="entry name" value="Ribonuclease H-like superfamily/Ribonuclease H"/>
    <property type="match status" value="1"/>
</dbReference>
<dbReference type="HAMAP" id="MF_00042">
    <property type="entry name" value="RNase_H"/>
    <property type="match status" value="1"/>
</dbReference>
<dbReference type="InterPro" id="IPR050092">
    <property type="entry name" value="RNase_H"/>
</dbReference>
<dbReference type="InterPro" id="IPR012337">
    <property type="entry name" value="RNaseH-like_sf"/>
</dbReference>
<dbReference type="InterPro" id="IPR002156">
    <property type="entry name" value="RNaseH_domain"/>
</dbReference>
<dbReference type="InterPro" id="IPR036397">
    <property type="entry name" value="RNaseH_sf"/>
</dbReference>
<dbReference type="InterPro" id="IPR022892">
    <property type="entry name" value="RNaseHI"/>
</dbReference>
<dbReference type="NCBIfam" id="NF001236">
    <property type="entry name" value="PRK00203.1"/>
    <property type="match status" value="1"/>
</dbReference>
<dbReference type="PANTHER" id="PTHR10642">
    <property type="entry name" value="RIBONUCLEASE H1"/>
    <property type="match status" value="1"/>
</dbReference>
<dbReference type="PANTHER" id="PTHR10642:SF26">
    <property type="entry name" value="RIBONUCLEASE H1"/>
    <property type="match status" value="1"/>
</dbReference>
<dbReference type="Pfam" id="PF00075">
    <property type="entry name" value="RNase_H"/>
    <property type="match status" value="1"/>
</dbReference>
<dbReference type="SUPFAM" id="SSF53098">
    <property type="entry name" value="Ribonuclease H-like"/>
    <property type="match status" value="1"/>
</dbReference>
<dbReference type="PROSITE" id="PS50879">
    <property type="entry name" value="RNASE_H_1"/>
    <property type="match status" value="1"/>
</dbReference>